<dbReference type="EC" id="3.2.1.22"/>
<dbReference type="EMBL" id="X03102">
    <property type="protein sequence ID" value="CAA26888.1"/>
    <property type="molecule type" value="Genomic_DNA"/>
</dbReference>
<dbReference type="EMBL" id="M10604">
    <property type="protein sequence ID" value="AAA34770.1"/>
    <property type="molecule type" value="Genomic_DNA"/>
</dbReference>
<dbReference type="PIR" id="A00897">
    <property type="entry name" value="GBBYAG"/>
</dbReference>
<dbReference type="PDB" id="3LRK">
    <property type="method" value="X-ray"/>
    <property type="resolution" value="1.95 A"/>
    <property type="chains" value="A=1-471"/>
</dbReference>
<dbReference type="PDB" id="3LRL">
    <property type="method" value="X-ray"/>
    <property type="resolution" value="2.40 A"/>
    <property type="chains" value="A=1-471"/>
</dbReference>
<dbReference type="PDB" id="3LRM">
    <property type="method" value="X-ray"/>
    <property type="resolution" value="2.70 A"/>
    <property type="chains" value="A/B/C/D=1-471"/>
</dbReference>
<dbReference type="PDBsum" id="3LRK"/>
<dbReference type="PDBsum" id="3LRL"/>
<dbReference type="PDBsum" id="3LRM"/>
<dbReference type="SMR" id="P04824"/>
<dbReference type="DIP" id="DIP-1369N"/>
<dbReference type="IntAct" id="P04824">
    <property type="interactions" value="1"/>
</dbReference>
<dbReference type="MINT" id="P04824"/>
<dbReference type="CAZy" id="GH27">
    <property type="family name" value="Glycoside Hydrolase Family 27"/>
</dbReference>
<dbReference type="GlyCosmos" id="P04824">
    <property type="glycosylation" value="9 sites, No reported glycans"/>
</dbReference>
<dbReference type="iPTMnet" id="P04824"/>
<dbReference type="SGD" id="S000029662">
    <property type="gene designation" value="MEL1"/>
</dbReference>
<dbReference type="BRENDA" id="3.2.1.22">
    <property type="organism ID" value="984"/>
</dbReference>
<dbReference type="EvolutionaryTrace" id="P04824"/>
<dbReference type="GO" id="GO:0005576">
    <property type="term" value="C:extracellular region"/>
    <property type="evidence" value="ECO:0000314"/>
    <property type="project" value="SGD"/>
</dbReference>
<dbReference type="GO" id="GO:0004557">
    <property type="term" value="F:alpha-galactosidase activity"/>
    <property type="evidence" value="ECO:0000314"/>
    <property type="project" value="SGD"/>
</dbReference>
<dbReference type="GO" id="GO:0005995">
    <property type="term" value="P:melibiose catabolic process"/>
    <property type="evidence" value="ECO:0000315"/>
    <property type="project" value="SGD"/>
</dbReference>
<dbReference type="CDD" id="cd14792">
    <property type="entry name" value="GH27"/>
    <property type="match status" value="1"/>
</dbReference>
<dbReference type="FunFam" id="3.20.20.70:FF:000202">
    <property type="entry name" value="Alpha-galactosidase"/>
    <property type="match status" value="1"/>
</dbReference>
<dbReference type="Gene3D" id="3.20.20.70">
    <property type="entry name" value="Aldolase class I"/>
    <property type="match status" value="1"/>
</dbReference>
<dbReference type="Gene3D" id="2.60.40.1180">
    <property type="entry name" value="Golgi alpha-mannosidase II"/>
    <property type="match status" value="1"/>
</dbReference>
<dbReference type="InterPro" id="IPR013785">
    <property type="entry name" value="Aldolase_TIM"/>
</dbReference>
<dbReference type="InterPro" id="IPR002241">
    <property type="entry name" value="Glyco_hydro_27"/>
</dbReference>
<dbReference type="InterPro" id="IPR000111">
    <property type="entry name" value="Glyco_hydro_27/36_CS"/>
</dbReference>
<dbReference type="InterPro" id="IPR013780">
    <property type="entry name" value="Glyco_hydro_b"/>
</dbReference>
<dbReference type="InterPro" id="IPR006215">
    <property type="entry name" value="Glyco_hydro_melibiase"/>
</dbReference>
<dbReference type="InterPro" id="IPR017853">
    <property type="entry name" value="Glycoside_hydrolase_SF"/>
</dbReference>
<dbReference type="InterPro" id="IPR041233">
    <property type="entry name" value="Melibiase_C"/>
</dbReference>
<dbReference type="PANTHER" id="PTHR11452:SF75">
    <property type="entry name" value="ALPHA-GALACTOSIDASE MEL1"/>
    <property type="match status" value="1"/>
</dbReference>
<dbReference type="PANTHER" id="PTHR11452">
    <property type="entry name" value="ALPHA-GALACTOSIDASE/ALPHA-N-ACETYLGALACTOSAMINIDASE"/>
    <property type="match status" value="1"/>
</dbReference>
<dbReference type="Pfam" id="PF16499">
    <property type="entry name" value="Melibiase_2"/>
    <property type="match status" value="1"/>
</dbReference>
<dbReference type="Pfam" id="PF17801">
    <property type="entry name" value="Melibiase_C"/>
    <property type="match status" value="1"/>
</dbReference>
<dbReference type="PRINTS" id="PR00740">
    <property type="entry name" value="GLHYDRLASE27"/>
</dbReference>
<dbReference type="PRINTS" id="PR00748">
    <property type="entry name" value="MELIBIASE"/>
</dbReference>
<dbReference type="SUPFAM" id="SSF51445">
    <property type="entry name" value="(Trans)glycosidases"/>
    <property type="match status" value="1"/>
</dbReference>
<dbReference type="SUPFAM" id="SSF51011">
    <property type="entry name" value="Glycosyl hydrolase domain"/>
    <property type="match status" value="1"/>
</dbReference>
<dbReference type="PROSITE" id="PS00512">
    <property type="entry name" value="ALPHA_GALACTOSIDASE"/>
    <property type="match status" value="1"/>
</dbReference>
<reference key="1">
    <citation type="journal article" date="1985" name="Nucleic Acids Res.">
        <title>The nucleotide sequence of the yeast MEL1 gene.</title>
        <authorList>
            <person name="Liljestroem P.L."/>
        </authorList>
    </citation>
    <scope>NUCLEOTIDE SEQUENCE [GENOMIC DNA]</scope>
</reference>
<reference key="2">
    <citation type="journal article" date="1985" name="Gene">
        <title>Analysis of the inducible MEL1 gene of Saccharomyces carlsbergensis and its secreted product, alpha-galactosidase (melibiase).</title>
        <authorList>
            <person name="Sumner-Smith M."/>
            <person name="Bozzato R.P."/>
            <person name="Skipper N."/>
            <person name="Davies R.W."/>
            <person name="Hopper J.E."/>
        </authorList>
    </citation>
    <scope>NUCLEOTIDE SEQUENCE [GENOMIC DNA]</scope>
    <source>
        <strain>Carlsbergensis</strain>
    </source>
</reference>
<reference key="3">
    <citation type="journal article" date="2010" name="J. Biol. Chem.">
        <title>Structural analysis of Saccharomyces cerevisiae alpha-galactosidase and its complexes with natural substrates reveals new insights into substrate specificity of GH27 glycosidases.</title>
        <authorList>
            <person name="Fernandez-Leiro R."/>
            <person name="Pereira-Rodriguez A."/>
            <person name="Cerdan M.E."/>
            <person name="Becerra M."/>
            <person name="Sanz-Aparicio J."/>
        </authorList>
    </citation>
    <scope>X-RAY CRYSTALLOGRAPHY (1.95 ANGSTROMS) ALONE AND IN COMPLEX WITH MELIBIOSE AND RAFFINOSE</scope>
    <scope>SUBCELLULAR LOCATION</scope>
    <scope>SUBUNIT</scope>
    <scope>ACTIVE SITE</scope>
    <scope>SUBSTRATE-BINDING SITES</scope>
    <scope>GLYCOSYLATION AT ASN-105; ASN-175; ASN-270; ASN-370; ASN-403 AND ASN-422</scope>
    <scope>DISULFIDE BONDS</scope>
</reference>
<evidence type="ECO:0000255" key="1"/>
<evidence type="ECO:0000269" key="2">
    <source>
    </source>
</evidence>
<evidence type="ECO:0000305" key="3"/>
<evidence type="ECO:0007829" key="4">
    <source>
        <dbReference type="PDB" id="3LRK"/>
    </source>
</evidence>
<feature type="signal peptide">
    <location>
        <begin position="1"/>
        <end position="18"/>
    </location>
</feature>
<feature type="chain" id="PRO_0000001013" description="Alpha-galactosidase 1">
    <location>
        <begin position="19"/>
        <end position="471"/>
    </location>
</feature>
<feature type="active site" description="Nucleophile" evidence="2">
    <location>
        <position position="149"/>
    </location>
</feature>
<feature type="active site" description="Proton donor" evidence="2">
    <location>
        <position position="209"/>
    </location>
</feature>
<feature type="binding site">
    <location>
        <position position="72"/>
    </location>
    <ligand>
        <name>substrate</name>
    </ligand>
</feature>
<feature type="binding site">
    <location>
        <position position="73"/>
    </location>
    <ligand>
        <name>substrate</name>
    </ligand>
</feature>
<feature type="binding site">
    <location>
        <position position="147"/>
    </location>
    <ligand>
        <name>substrate</name>
    </ligand>
</feature>
<feature type="binding site">
    <location>
        <position position="205"/>
    </location>
    <ligand>
        <name>substrate</name>
    </ligand>
</feature>
<feature type="binding site">
    <location>
        <position position="251"/>
    </location>
    <ligand>
        <name>substrate</name>
    </ligand>
</feature>
<feature type="glycosylation site" description="N-linked (GlcNAc...) asparagine" evidence="2">
    <location>
        <position position="105"/>
    </location>
</feature>
<feature type="glycosylation site" description="N-linked (GlcNAc...) asparagine" evidence="2">
    <location>
        <position position="175"/>
    </location>
</feature>
<feature type="glycosylation site" description="N-linked (GlcNAc...) asparagine" evidence="2">
    <location>
        <position position="270"/>
    </location>
</feature>
<feature type="glycosylation site" description="N-linked (GlcNAc...) asparagine" evidence="2">
    <location>
        <position position="370"/>
    </location>
</feature>
<feature type="glycosylation site" description="N-linked (GlcNAc...) asparagine" evidence="2">
    <location>
        <position position="403"/>
    </location>
</feature>
<feature type="glycosylation site" description="N-linked (GlcNAc...) asparagine" evidence="1">
    <location>
        <position position="413"/>
    </location>
</feature>
<feature type="glycosylation site" description="N-linked (GlcNAc...) asparagine" evidence="2">
    <location>
        <position position="422"/>
    </location>
</feature>
<feature type="glycosylation site" description="N-linked (GlcNAc...) asparagine" evidence="1">
    <location>
        <position position="435"/>
    </location>
</feature>
<feature type="glycosylation site" description="N-linked (GlcNAc...) asparagine" evidence="1">
    <location>
        <position position="454"/>
    </location>
</feature>
<feature type="disulfide bond" evidence="2">
    <location>
        <begin position="42"/>
        <end position="74"/>
    </location>
</feature>
<feature type="disulfide bond" evidence="2">
    <location>
        <begin position="121"/>
        <end position="151"/>
    </location>
</feature>
<feature type="disulfide bond" evidence="2">
    <location>
        <begin position="221"/>
        <end position="237"/>
    </location>
</feature>
<feature type="disulfide bond" evidence="2">
    <location>
        <begin position="223"/>
        <end position="230"/>
    </location>
</feature>
<feature type="strand" evidence="4">
    <location>
        <begin position="23"/>
        <end position="25"/>
    </location>
</feature>
<feature type="strand" evidence="4">
    <location>
        <begin position="32"/>
        <end position="36"/>
    </location>
</feature>
<feature type="helix" evidence="4">
    <location>
        <begin position="37"/>
        <end position="40"/>
    </location>
</feature>
<feature type="helix" evidence="4">
    <location>
        <begin position="46"/>
        <end position="58"/>
    </location>
</feature>
<feature type="helix" evidence="4">
    <location>
        <begin position="62"/>
        <end position="64"/>
    </location>
</feature>
<feature type="strand" evidence="4">
    <location>
        <begin position="68"/>
        <end position="70"/>
    </location>
</feature>
<feature type="strand" evidence="4">
    <location>
        <begin position="76"/>
        <end position="79"/>
    </location>
</feature>
<feature type="strand" evidence="4">
    <location>
        <begin position="85"/>
        <end position="87"/>
    </location>
</feature>
<feature type="turn" evidence="4">
    <location>
        <begin position="89"/>
        <end position="91"/>
    </location>
</feature>
<feature type="helix" evidence="4">
    <location>
        <begin position="96"/>
        <end position="105"/>
    </location>
</feature>
<feature type="strand" evidence="4">
    <location>
        <begin position="109"/>
        <end position="119"/>
    </location>
</feature>
<feature type="strand" evidence="4">
    <location>
        <begin position="123"/>
        <end position="125"/>
    </location>
</feature>
<feature type="helix" evidence="4">
    <location>
        <begin position="131"/>
        <end position="140"/>
    </location>
</feature>
<feature type="strand" evidence="4">
    <location>
        <begin position="145"/>
        <end position="149"/>
    </location>
</feature>
<feature type="helix" evidence="4">
    <location>
        <begin position="160"/>
        <end position="177"/>
    </location>
</feature>
<feature type="strand" evidence="4">
    <location>
        <begin position="182"/>
        <end position="185"/>
    </location>
</feature>
<feature type="turn" evidence="4">
    <location>
        <begin position="188"/>
        <end position="192"/>
    </location>
</feature>
<feature type="helix" evidence="4">
    <location>
        <begin position="193"/>
        <end position="196"/>
    </location>
</feature>
<feature type="turn" evidence="4">
    <location>
        <begin position="198"/>
        <end position="200"/>
    </location>
</feature>
<feature type="strand" evidence="4">
    <location>
        <begin position="202"/>
        <end position="205"/>
    </location>
</feature>
<feature type="helix" evidence="4">
    <location>
        <begin position="239"/>
        <end position="246"/>
    </location>
</feature>
<feature type="helix" evidence="4">
    <location>
        <begin position="247"/>
        <end position="252"/>
    </location>
</feature>
<feature type="strand" evidence="4">
    <location>
        <begin position="257"/>
        <end position="260"/>
    </location>
</feature>
<feature type="helix" evidence="4">
    <location>
        <begin position="273"/>
        <end position="285"/>
    </location>
</feature>
<feature type="strand" evidence="4">
    <location>
        <begin position="290"/>
        <end position="292"/>
    </location>
</feature>
<feature type="helix" evidence="4">
    <location>
        <begin position="296"/>
        <end position="298"/>
    </location>
</feature>
<feature type="helix" evidence="4">
    <location>
        <begin position="301"/>
        <end position="307"/>
    </location>
</feature>
<feature type="helix" evidence="4">
    <location>
        <begin position="310"/>
        <end position="316"/>
    </location>
</feature>
<feature type="strand" evidence="4">
    <location>
        <begin position="325"/>
        <end position="331"/>
    </location>
</feature>
<feature type="strand" evidence="4">
    <location>
        <begin position="342"/>
        <end position="349"/>
    </location>
</feature>
<feature type="strand" evidence="4">
    <location>
        <begin position="355"/>
        <end position="361"/>
    </location>
</feature>
<feature type="strand" evidence="4">
    <location>
        <begin position="363"/>
        <end position="365"/>
    </location>
</feature>
<feature type="strand" evidence="4">
    <location>
        <begin position="367"/>
        <end position="371"/>
    </location>
</feature>
<feature type="helix" evidence="4">
    <location>
        <begin position="373"/>
        <end position="376"/>
    </location>
</feature>
<feature type="turn" evidence="4">
    <location>
        <begin position="377"/>
        <end position="379"/>
    </location>
</feature>
<feature type="helix" evidence="4">
    <location>
        <begin position="385"/>
        <end position="388"/>
    </location>
</feature>
<feature type="strand" evidence="4">
    <location>
        <begin position="391"/>
        <end position="395"/>
    </location>
</feature>
<feature type="turn" evidence="4">
    <location>
        <begin position="396"/>
        <end position="399"/>
    </location>
</feature>
<feature type="helix" evidence="4">
    <location>
        <begin position="403"/>
        <end position="410"/>
    </location>
</feature>
<feature type="turn" evidence="4">
    <location>
        <begin position="417"/>
        <end position="419"/>
    </location>
</feature>
<feature type="turn" evidence="4">
    <location>
        <begin position="423"/>
        <end position="425"/>
    </location>
</feature>
<feature type="helix" evidence="4">
    <location>
        <begin position="428"/>
        <end position="433"/>
    </location>
</feature>
<feature type="helix" evidence="4">
    <location>
        <begin position="437"/>
        <end position="440"/>
    </location>
</feature>
<feature type="strand" evidence="4">
    <location>
        <begin position="442"/>
        <end position="447"/>
    </location>
</feature>
<feature type="strand" evidence="4">
    <location>
        <begin position="453"/>
        <end position="457"/>
    </location>
</feature>
<feature type="strand" evidence="4">
    <location>
        <begin position="461"/>
        <end position="469"/>
    </location>
</feature>
<organism>
    <name type="scientific">Saccharomyces cerevisiae</name>
    <name type="common">Baker's yeast</name>
    <dbReference type="NCBI Taxonomy" id="4932"/>
    <lineage>
        <taxon>Eukaryota</taxon>
        <taxon>Fungi</taxon>
        <taxon>Dikarya</taxon>
        <taxon>Ascomycota</taxon>
        <taxon>Saccharomycotina</taxon>
        <taxon>Saccharomycetes</taxon>
        <taxon>Saccharomycetales</taxon>
        <taxon>Saccharomycetaceae</taxon>
        <taxon>Saccharomyces</taxon>
    </lineage>
</organism>
<proteinExistence type="evidence at protein level"/>
<protein>
    <recommendedName>
        <fullName>Alpha-galactosidase 1</fullName>
        <ecNumber>3.2.1.22</ecNumber>
    </recommendedName>
    <alternativeName>
        <fullName>Alpha-D-galactoside galactohydrolase 1</fullName>
    </alternativeName>
    <alternativeName>
        <fullName>Melibiase 1</fullName>
    </alternativeName>
</protein>
<comment type="catalytic activity">
    <reaction>
        <text>Hydrolysis of terminal, non-reducing alpha-D-galactose residues in alpha-D-galactosides, including galactose oligosaccharides, galactomannans and galactolipids.</text>
        <dbReference type="EC" id="3.2.1.22"/>
    </reaction>
</comment>
<comment type="subunit">
    <text evidence="2">Homotetramer.</text>
</comment>
<comment type="subcellular location">
    <subcellularLocation>
        <location evidence="2">Secreted</location>
    </subcellularLocation>
</comment>
<comment type="induction">
    <text>Induced by galactose and melibiose and repressed by glucose.</text>
</comment>
<comment type="similarity">
    <text evidence="3">Belongs to the glycosyl hydrolase 27 family.</text>
</comment>
<gene>
    <name type="primary">MEL1</name>
</gene>
<keyword id="KW-0002">3D-structure</keyword>
<keyword id="KW-1015">Disulfide bond</keyword>
<keyword id="KW-0325">Glycoprotein</keyword>
<keyword id="KW-0326">Glycosidase</keyword>
<keyword id="KW-0378">Hydrolase</keyword>
<keyword id="KW-0964">Secreted</keyword>
<keyword id="KW-0732">Signal</keyword>
<name>MEL1_YEASX</name>
<sequence length="471" mass="52102">MFAFYFLTACISLKGVFGVSPSYNGLGLTPQMGWDNWNTFACDVSEQLLLDTADRISDLGLKDMGYKYIILDDCWSSGRDSDGFLVADEQKFPNGMGHVADHLHNNSFLFGMYSSAGEYTCAGYPGSLGREEEDAQFFANNRVDYLKYDNCYNKGQFGTPEISYHRYKAMSDALNKTGRPIFYSLCNWGQDLTFYWGSGIANSWRMSGDVTAEFTRPDSRCPCDGDEYDCKYAGFHCSIMNILNKAAPMGQNAGVGGWNDLDNLEVGVGNLTDDEEKAHFSMWAMVKSPLIIGANVNNLKASSYSIYSQASVIAINQDSNGIPATRVWRYYVSDTDEYGQGEIQMWSGPLDNGDQVVALLNGGSVSRPMNTTLEEIFFDSNLGSKKLTSTWDIYDLWANRVDNSTASAILGRNKTATGILYNATEQSYKDGLSKNDTRLFGQKIGSLSPNAILNTTVPAHGIAFYRLRPSS</sequence>
<accession>P04824</accession>